<protein>
    <recommendedName>
        <fullName evidence="1">Arginine--tRNA ligase</fullName>
        <ecNumber evidence="1">6.1.1.19</ecNumber>
    </recommendedName>
    <alternativeName>
        <fullName evidence="1">Arginyl-tRNA synthetase</fullName>
        <shortName evidence="1">ArgRS</shortName>
    </alternativeName>
</protein>
<name>SYR_CHLAD</name>
<gene>
    <name evidence="1" type="primary">argS</name>
    <name type="ordered locus">Cagg_2606</name>
</gene>
<reference key="1">
    <citation type="submission" date="2008-12" db="EMBL/GenBank/DDBJ databases">
        <title>Complete sequence of Chloroflexus aggregans DSM 9485.</title>
        <authorList>
            <consortium name="US DOE Joint Genome Institute"/>
            <person name="Lucas S."/>
            <person name="Copeland A."/>
            <person name="Lapidus A."/>
            <person name="Glavina del Rio T."/>
            <person name="Dalin E."/>
            <person name="Tice H."/>
            <person name="Pitluck S."/>
            <person name="Foster B."/>
            <person name="Larimer F."/>
            <person name="Land M."/>
            <person name="Hauser L."/>
            <person name="Kyrpides N."/>
            <person name="Mikhailova N."/>
            <person name="Bryant D.A."/>
            <person name="Richardson P."/>
        </authorList>
    </citation>
    <scope>NUCLEOTIDE SEQUENCE [LARGE SCALE GENOMIC DNA]</scope>
    <source>
        <strain>MD-66 / DSM 9485</strain>
    </source>
</reference>
<evidence type="ECO:0000255" key="1">
    <source>
        <dbReference type="HAMAP-Rule" id="MF_00123"/>
    </source>
</evidence>
<proteinExistence type="inferred from homology"/>
<sequence length="574" mass="63390">MRYALERFITDIKDAIAATGKVPVDLIEITTPKPNIPADRTFVTFKAAKVLGVDPAKLAAELAATIAPPPDSLIGEVTATGAFLNFSLHPQRLAAAVLNEIETAGEAYGTVADGAGRTVVIDYSSPNIAKRMHVGHIRSTIIGQALVHIFRALGYRVIGDNHLGDWGTQFGIILAAMQRYGRPQNEGEAAMAELEALYARYNAEMKDDPALEDEARRWSLALERGDPEARSLWQWCVDLSLRAAQRNYDRLGIRFDYAYGESFYEAMLPGVIEEALRSEAAFRDVDGAVVAELDKLPKFIIQRSDGGTVYMTRDIATIKFRLQEFSPSHIIYVVDARQELHFRQLFAIVRAMGYARDVELVHVPFGVITTPDGQPLSTKKGNMVYLEALLDDAVARARALVDAKSADLPLEERAAIAEAVGIGAVIYNDLYQDPRRNITLDWDRMLSIEGNSAAYLQYSHARCRSILRRAADEGVALAEADLTLLTHPSEQRLIRHLARLPEAVREAGARYAPFVIADWCYTTAREFGIFFEQCPVLRAETPALRAARLQLVAATANALRNGLALLGIQAPERM</sequence>
<keyword id="KW-0030">Aminoacyl-tRNA synthetase</keyword>
<keyword id="KW-0067">ATP-binding</keyword>
<keyword id="KW-0963">Cytoplasm</keyword>
<keyword id="KW-0436">Ligase</keyword>
<keyword id="KW-0547">Nucleotide-binding</keyword>
<keyword id="KW-0648">Protein biosynthesis</keyword>
<feature type="chain" id="PRO_1000198883" description="Arginine--tRNA ligase">
    <location>
        <begin position="1"/>
        <end position="574"/>
    </location>
</feature>
<feature type="short sequence motif" description="'HIGH' region">
    <location>
        <begin position="126"/>
        <end position="136"/>
    </location>
</feature>
<organism>
    <name type="scientific">Chloroflexus aggregans (strain MD-66 / DSM 9485)</name>
    <dbReference type="NCBI Taxonomy" id="326427"/>
    <lineage>
        <taxon>Bacteria</taxon>
        <taxon>Bacillati</taxon>
        <taxon>Chloroflexota</taxon>
        <taxon>Chloroflexia</taxon>
        <taxon>Chloroflexales</taxon>
        <taxon>Chloroflexineae</taxon>
        <taxon>Chloroflexaceae</taxon>
        <taxon>Chloroflexus</taxon>
    </lineage>
</organism>
<comment type="catalytic activity">
    <reaction evidence="1">
        <text>tRNA(Arg) + L-arginine + ATP = L-arginyl-tRNA(Arg) + AMP + diphosphate</text>
        <dbReference type="Rhea" id="RHEA:20301"/>
        <dbReference type="Rhea" id="RHEA-COMP:9658"/>
        <dbReference type="Rhea" id="RHEA-COMP:9673"/>
        <dbReference type="ChEBI" id="CHEBI:30616"/>
        <dbReference type="ChEBI" id="CHEBI:32682"/>
        <dbReference type="ChEBI" id="CHEBI:33019"/>
        <dbReference type="ChEBI" id="CHEBI:78442"/>
        <dbReference type="ChEBI" id="CHEBI:78513"/>
        <dbReference type="ChEBI" id="CHEBI:456215"/>
        <dbReference type="EC" id="6.1.1.19"/>
    </reaction>
</comment>
<comment type="subunit">
    <text evidence="1">Monomer.</text>
</comment>
<comment type="subcellular location">
    <subcellularLocation>
        <location evidence="1">Cytoplasm</location>
    </subcellularLocation>
</comment>
<comment type="similarity">
    <text evidence="1">Belongs to the class-I aminoacyl-tRNA synthetase family.</text>
</comment>
<accession>B8G4J9</accession>
<dbReference type="EC" id="6.1.1.19" evidence="1"/>
<dbReference type="EMBL" id="CP001337">
    <property type="protein sequence ID" value="ACL25475.1"/>
    <property type="molecule type" value="Genomic_DNA"/>
</dbReference>
<dbReference type="RefSeq" id="WP_015941333.1">
    <property type="nucleotide sequence ID" value="NC_011831.1"/>
</dbReference>
<dbReference type="SMR" id="B8G4J9"/>
<dbReference type="STRING" id="326427.Cagg_2606"/>
<dbReference type="KEGG" id="cag:Cagg_2606"/>
<dbReference type="eggNOG" id="COG0018">
    <property type="taxonomic scope" value="Bacteria"/>
</dbReference>
<dbReference type="HOGENOM" id="CLU_006406_5_1_0"/>
<dbReference type="OrthoDB" id="9805987at2"/>
<dbReference type="Proteomes" id="UP000002508">
    <property type="component" value="Chromosome"/>
</dbReference>
<dbReference type="GO" id="GO:0005737">
    <property type="term" value="C:cytoplasm"/>
    <property type="evidence" value="ECO:0007669"/>
    <property type="project" value="UniProtKB-SubCell"/>
</dbReference>
<dbReference type="GO" id="GO:0004814">
    <property type="term" value="F:arginine-tRNA ligase activity"/>
    <property type="evidence" value="ECO:0007669"/>
    <property type="project" value="UniProtKB-UniRule"/>
</dbReference>
<dbReference type="GO" id="GO:0005524">
    <property type="term" value="F:ATP binding"/>
    <property type="evidence" value="ECO:0007669"/>
    <property type="project" value="UniProtKB-UniRule"/>
</dbReference>
<dbReference type="GO" id="GO:0006420">
    <property type="term" value="P:arginyl-tRNA aminoacylation"/>
    <property type="evidence" value="ECO:0007669"/>
    <property type="project" value="UniProtKB-UniRule"/>
</dbReference>
<dbReference type="CDD" id="cd07956">
    <property type="entry name" value="Anticodon_Ia_Arg"/>
    <property type="match status" value="1"/>
</dbReference>
<dbReference type="CDD" id="cd00671">
    <property type="entry name" value="ArgRS_core"/>
    <property type="match status" value="1"/>
</dbReference>
<dbReference type="FunFam" id="1.10.730.10:FF:000008">
    <property type="entry name" value="Arginine--tRNA ligase"/>
    <property type="match status" value="1"/>
</dbReference>
<dbReference type="FunFam" id="3.40.50.620:FF:000116">
    <property type="entry name" value="Arginine--tRNA ligase"/>
    <property type="match status" value="1"/>
</dbReference>
<dbReference type="Gene3D" id="3.30.1360.70">
    <property type="entry name" value="Arginyl tRNA synthetase N-terminal domain"/>
    <property type="match status" value="1"/>
</dbReference>
<dbReference type="Gene3D" id="3.40.50.620">
    <property type="entry name" value="HUPs"/>
    <property type="match status" value="1"/>
</dbReference>
<dbReference type="Gene3D" id="1.10.730.10">
    <property type="entry name" value="Isoleucyl-tRNA Synthetase, Domain 1"/>
    <property type="match status" value="1"/>
</dbReference>
<dbReference type="HAMAP" id="MF_00123">
    <property type="entry name" value="Arg_tRNA_synth"/>
    <property type="match status" value="1"/>
</dbReference>
<dbReference type="InterPro" id="IPR001412">
    <property type="entry name" value="aa-tRNA-synth_I_CS"/>
</dbReference>
<dbReference type="InterPro" id="IPR001278">
    <property type="entry name" value="Arg-tRNA-ligase"/>
</dbReference>
<dbReference type="InterPro" id="IPR005148">
    <property type="entry name" value="Arg-tRNA-synth_N"/>
</dbReference>
<dbReference type="InterPro" id="IPR036695">
    <property type="entry name" value="Arg-tRNA-synth_N_sf"/>
</dbReference>
<dbReference type="InterPro" id="IPR035684">
    <property type="entry name" value="ArgRS_core"/>
</dbReference>
<dbReference type="InterPro" id="IPR008909">
    <property type="entry name" value="DALR_anticod-bd"/>
</dbReference>
<dbReference type="InterPro" id="IPR014729">
    <property type="entry name" value="Rossmann-like_a/b/a_fold"/>
</dbReference>
<dbReference type="InterPro" id="IPR009080">
    <property type="entry name" value="tRNAsynth_Ia_anticodon-bd"/>
</dbReference>
<dbReference type="NCBIfam" id="TIGR00456">
    <property type="entry name" value="argS"/>
    <property type="match status" value="1"/>
</dbReference>
<dbReference type="PANTHER" id="PTHR11956:SF5">
    <property type="entry name" value="ARGININE--TRNA LIGASE, CYTOPLASMIC"/>
    <property type="match status" value="1"/>
</dbReference>
<dbReference type="PANTHER" id="PTHR11956">
    <property type="entry name" value="ARGINYL-TRNA SYNTHETASE"/>
    <property type="match status" value="1"/>
</dbReference>
<dbReference type="Pfam" id="PF03485">
    <property type="entry name" value="Arg_tRNA_synt_N"/>
    <property type="match status" value="1"/>
</dbReference>
<dbReference type="Pfam" id="PF05746">
    <property type="entry name" value="DALR_1"/>
    <property type="match status" value="1"/>
</dbReference>
<dbReference type="Pfam" id="PF00750">
    <property type="entry name" value="tRNA-synt_1d"/>
    <property type="match status" value="1"/>
</dbReference>
<dbReference type="PRINTS" id="PR01038">
    <property type="entry name" value="TRNASYNTHARG"/>
</dbReference>
<dbReference type="SMART" id="SM01016">
    <property type="entry name" value="Arg_tRNA_synt_N"/>
    <property type="match status" value="1"/>
</dbReference>
<dbReference type="SMART" id="SM00836">
    <property type="entry name" value="DALR_1"/>
    <property type="match status" value="1"/>
</dbReference>
<dbReference type="SUPFAM" id="SSF47323">
    <property type="entry name" value="Anticodon-binding domain of a subclass of class I aminoacyl-tRNA synthetases"/>
    <property type="match status" value="1"/>
</dbReference>
<dbReference type="SUPFAM" id="SSF55190">
    <property type="entry name" value="Arginyl-tRNA synthetase (ArgRS), N-terminal 'additional' domain"/>
    <property type="match status" value="1"/>
</dbReference>
<dbReference type="SUPFAM" id="SSF52374">
    <property type="entry name" value="Nucleotidylyl transferase"/>
    <property type="match status" value="1"/>
</dbReference>
<dbReference type="PROSITE" id="PS00178">
    <property type="entry name" value="AA_TRNA_LIGASE_I"/>
    <property type="match status" value="1"/>
</dbReference>